<protein>
    <recommendedName>
        <fullName evidence="1">GTPase Der</fullName>
    </recommendedName>
    <alternativeName>
        <fullName evidence="1">GTP-binding protein EngA</fullName>
    </alternativeName>
</protein>
<feature type="chain" id="PRO_0000278047" description="GTPase Der">
    <location>
        <begin position="1"/>
        <end position="452"/>
    </location>
</feature>
<feature type="domain" description="EngA-type G 1">
    <location>
        <begin position="9"/>
        <end position="170"/>
    </location>
</feature>
<feature type="domain" description="EngA-type G 2">
    <location>
        <begin position="185"/>
        <end position="362"/>
    </location>
</feature>
<feature type="domain" description="KH-like" evidence="1">
    <location>
        <begin position="363"/>
        <end position="448"/>
    </location>
</feature>
<feature type="binding site" evidence="1">
    <location>
        <begin position="15"/>
        <end position="22"/>
    </location>
    <ligand>
        <name>GTP</name>
        <dbReference type="ChEBI" id="CHEBI:37565"/>
        <label>1</label>
    </ligand>
</feature>
<feature type="binding site" evidence="1">
    <location>
        <begin position="62"/>
        <end position="66"/>
    </location>
    <ligand>
        <name>GTP</name>
        <dbReference type="ChEBI" id="CHEBI:37565"/>
        <label>1</label>
    </ligand>
</feature>
<feature type="binding site" evidence="1">
    <location>
        <begin position="124"/>
        <end position="127"/>
    </location>
    <ligand>
        <name>GTP</name>
        <dbReference type="ChEBI" id="CHEBI:37565"/>
        <label>1</label>
    </ligand>
</feature>
<feature type="binding site" evidence="1">
    <location>
        <begin position="191"/>
        <end position="198"/>
    </location>
    <ligand>
        <name>GTP</name>
        <dbReference type="ChEBI" id="CHEBI:37565"/>
        <label>2</label>
    </ligand>
</feature>
<feature type="binding site" evidence="1">
    <location>
        <begin position="238"/>
        <end position="242"/>
    </location>
    <ligand>
        <name>GTP</name>
        <dbReference type="ChEBI" id="CHEBI:37565"/>
        <label>2</label>
    </ligand>
</feature>
<feature type="binding site" evidence="1">
    <location>
        <begin position="303"/>
        <end position="306"/>
    </location>
    <ligand>
        <name>GTP</name>
        <dbReference type="ChEBI" id="CHEBI:37565"/>
        <label>2</label>
    </ligand>
</feature>
<sequence length="452" mass="51111">MTKKIIAKKIIALVGRPNVGKSTLFNRLSMRKKAIVHDLPGVTRDRKYTDGRIGSFEFSLIDTPGLEENPDSFGKRLMEQTTKAINEADLICFMVDSRSGILPDDKLLSDFVRKYNKPAVLVINKCEKAFDFDKEYYKLGFDSMVAISAEHGTGMIDLYDEIIAKLPEEDSAEAEIHDPIKGDCLQIVVSGRPNAGKSTFINALINDERLLTGPEAGITRESIEIDWQYKGNHIKLIDTAGLRKKATITESLEKLSASDAINSIKFANTVILMIDALSPLKQQDLNIASHVANEGRSIVIVVNKWDLIKESEKEAFKEEFYYQINTTLPQVKGVPALFISAKNKQNIADVLDSCIKIYKTWNKKITTSKLNEWLNFTTEAHPLPLQKGGKRVRVKYMTQTKTRPPTFKLFSNNPEKITDSYTRYLVNNMREAFDMPGVPIRFNYIKTKNPYV</sequence>
<reference key="1">
    <citation type="journal article" date="2006" name="PLoS Genet.">
        <title>Genome sequence of Rickettsia bellii illuminates the role of amoebae in gene exchanges between intracellular pathogens.</title>
        <authorList>
            <person name="Ogata H."/>
            <person name="La Scola B."/>
            <person name="Audic S."/>
            <person name="Renesto P."/>
            <person name="Blanc G."/>
            <person name="Robert C."/>
            <person name="Fournier P.-E."/>
            <person name="Claverie J.-M."/>
            <person name="Raoult D."/>
        </authorList>
    </citation>
    <scope>NUCLEOTIDE SEQUENCE [LARGE SCALE GENOMIC DNA]</scope>
    <source>
        <strain>RML369-C</strain>
    </source>
</reference>
<proteinExistence type="inferred from homology"/>
<organism>
    <name type="scientific">Rickettsia bellii (strain RML369-C)</name>
    <dbReference type="NCBI Taxonomy" id="336407"/>
    <lineage>
        <taxon>Bacteria</taxon>
        <taxon>Pseudomonadati</taxon>
        <taxon>Pseudomonadota</taxon>
        <taxon>Alphaproteobacteria</taxon>
        <taxon>Rickettsiales</taxon>
        <taxon>Rickettsiaceae</taxon>
        <taxon>Rickettsieae</taxon>
        <taxon>Rickettsia</taxon>
        <taxon>belli group</taxon>
    </lineage>
</organism>
<gene>
    <name evidence="1" type="primary">der</name>
    <name type="synonym">engA</name>
    <name type="ordered locus">RBE_0212</name>
</gene>
<dbReference type="EMBL" id="CP000087">
    <property type="protein sequence ID" value="ABE04293.1"/>
    <property type="molecule type" value="Genomic_DNA"/>
</dbReference>
<dbReference type="SMR" id="Q1RK21"/>
<dbReference type="KEGG" id="rbe:RBE_0212"/>
<dbReference type="eggNOG" id="COG1160">
    <property type="taxonomic scope" value="Bacteria"/>
</dbReference>
<dbReference type="HOGENOM" id="CLU_016077_5_0_5"/>
<dbReference type="Proteomes" id="UP000001951">
    <property type="component" value="Chromosome"/>
</dbReference>
<dbReference type="GO" id="GO:0005525">
    <property type="term" value="F:GTP binding"/>
    <property type="evidence" value="ECO:0007669"/>
    <property type="project" value="UniProtKB-UniRule"/>
</dbReference>
<dbReference type="GO" id="GO:0042254">
    <property type="term" value="P:ribosome biogenesis"/>
    <property type="evidence" value="ECO:0007669"/>
    <property type="project" value="UniProtKB-KW"/>
</dbReference>
<dbReference type="CDD" id="cd01894">
    <property type="entry name" value="EngA1"/>
    <property type="match status" value="1"/>
</dbReference>
<dbReference type="CDD" id="cd01895">
    <property type="entry name" value="EngA2"/>
    <property type="match status" value="1"/>
</dbReference>
<dbReference type="FunFam" id="3.30.300.20:FF:000004">
    <property type="entry name" value="GTPase Der"/>
    <property type="match status" value="1"/>
</dbReference>
<dbReference type="Gene3D" id="3.30.300.20">
    <property type="match status" value="1"/>
</dbReference>
<dbReference type="Gene3D" id="3.40.50.300">
    <property type="entry name" value="P-loop containing nucleotide triphosphate hydrolases"/>
    <property type="match status" value="2"/>
</dbReference>
<dbReference type="HAMAP" id="MF_00195">
    <property type="entry name" value="GTPase_Der"/>
    <property type="match status" value="1"/>
</dbReference>
<dbReference type="InterPro" id="IPR031166">
    <property type="entry name" value="G_ENGA"/>
</dbReference>
<dbReference type="InterPro" id="IPR006073">
    <property type="entry name" value="GTP-bd"/>
</dbReference>
<dbReference type="InterPro" id="IPR016484">
    <property type="entry name" value="GTPase_Der"/>
</dbReference>
<dbReference type="InterPro" id="IPR032859">
    <property type="entry name" value="KH_dom-like"/>
</dbReference>
<dbReference type="InterPro" id="IPR015946">
    <property type="entry name" value="KH_dom-like_a/b"/>
</dbReference>
<dbReference type="InterPro" id="IPR027417">
    <property type="entry name" value="P-loop_NTPase"/>
</dbReference>
<dbReference type="InterPro" id="IPR005225">
    <property type="entry name" value="Small_GTP-bd"/>
</dbReference>
<dbReference type="NCBIfam" id="TIGR03594">
    <property type="entry name" value="GTPase_EngA"/>
    <property type="match status" value="1"/>
</dbReference>
<dbReference type="NCBIfam" id="TIGR00231">
    <property type="entry name" value="small_GTP"/>
    <property type="match status" value="2"/>
</dbReference>
<dbReference type="PANTHER" id="PTHR43834">
    <property type="entry name" value="GTPASE DER"/>
    <property type="match status" value="1"/>
</dbReference>
<dbReference type="PANTHER" id="PTHR43834:SF6">
    <property type="entry name" value="GTPASE DER"/>
    <property type="match status" value="1"/>
</dbReference>
<dbReference type="Pfam" id="PF14714">
    <property type="entry name" value="KH_dom-like"/>
    <property type="match status" value="1"/>
</dbReference>
<dbReference type="Pfam" id="PF01926">
    <property type="entry name" value="MMR_HSR1"/>
    <property type="match status" value="2"/>
</dbReference>
<dbReference type="PIRSF" id="PIRSF006485">
    <property type="entry name" value="GTP-binding_EngA"/>
    <property type="match status" value="1"/>
</dbReference>
<dbReference type="PRINTS" id="PR00326">
    <property type="entry name" value="GTP1OBG"/>
</dbReference>
<dbReference type="SUPFAM" id="SSF52540">
    <property type="entry name" value="P-loop containing nucleoside triphosphate hydrolases"/>
    <property type="match status" value="2"/>
</dbReference>
<dbReference type="PROSITE" id="PS51712">
    <property type="entry name" value="G_ENGA"/>
    <property type="match status" value="2"/>
</dbReference>
<accession>Q1RK21</accession>
<evidence type="ECO:0000255" key="1">
    <source>
        <dbReference type="HAMAP-Rule" id="MF_00195"/>
    </source>
</evidence>
<name>DER_RICBR</name>
<keyword id="KW-0342">GTP-binding</keyword>
<keyword id="KW-0547">Nucleotide-binding</keyword>
<keyword id="KW-0677">Repeat</keyword>
<keyword id="KW-0690">Ribosome biogenesis</keyword>
<comment type="function">
    <text evidence="1">GTPase that plays an essential role in the late steps of ribosome biogenesis.</text>
</comment>
<comment type="subunit">
    <text evidence="1">Associates with the 50S ribosomal subunit.</text>
</comment>
<comment type="similarity">
    <text evidence="1">Belongs to the TRAFAC class TrmE-Era-EngA-EngB-Septin-like GTPase superfamily. EngA (Der) GTPase family.</text>
</comment>